<gene>
    <name evidence="1" type="primary">pheS</name>
    <name type="ordered locus">PputGB1_3477</name>
</gene>
<sequence length="338" mass="38083">MENLDALVSQALEAVERAEDINALEQIRVNYLGKKGELTQVMKTLGNLPAEERPKVGALINDAKERVTVVLNARKAAFEEAELSARLAAECIDVTLPGRGQATGGLHPITRTLERIEQFFTHIGYGIAEGPEVEDDYHNFEALNIPGHHPARAMHDTFYFNANMLLRTHTSPVQVRTMESTQPPIRIVCPGRVYRCDSDITHSPMFHQVEGLLIDRDINFADLKGTIEEFLRVFFEKELAVRFRPSFFPFTEPSAEVDIQCVMCSGNGCRVCKQTGWLEVMGCGMVHPNVLRMSGIDPEEFQGFAFGMGAERLAMLRYGVNDLRLFFDNDLRFLAQFR</sequence>
<comment type="catalytic activity">
    <reaction evidence="1">
        <text>tRNA(Phe) + L-phenylalanine + ATP = L-phenylalanyl-tRNA(Phe) + AMP + diphosphate + H(+)</text>
        <dbReference type="Rhea" id="RHEA:19413"/>
        <dbReference type="Rhea" id="RHEA-COMP:9668"/>
        <dbReference type="Rhea" id="RHEA-COMP:9699"/>
        <dbReference type="ChEBI" id="CHEBI:15378"/>
        <dbReference type="ChEBI" id="CHEBI:30616"/>
        <dbReference type="ChEBI" id="CHEBI:33019"/>
        <dbReference type="ChEBI" id="CHEBI:58095"/>
        <dbReference type="ChEBI" id="CHEBI:78442"/>
        <dbReference type="ChEBI" id="CHEBI:78531"/>
        <dbReference type="ChEBI" id="CHEBI:456215"/>
        <dbReference type="EC" id="6.1.1.20"/>
    </reaction>
</comment>
<comment type="cofactor">
    <cofactor evidence="1">
        <name>Mg(2+)</name>
        <dbReference type="ChEBI" id="CHEBI:18420"/>
    </cofactor>
    <text evidence="1">Binds 2 magnesium ions per tetramer.</text>
</comment>
<comment type="subunit">
    <text evidence="1">Tetramer of two alpha and two beta subunits.</text>
</comment>
<comment type="subcellular location">
    <subcellularLocation>
        <location evidence="1">Cytoplasm</location>
    </subcellularLocation>
</comment>
<comment type="similarity">
    <text evidence="1">Belongs to the class-II aminoacyl-tRNA synthetase family. Phe-tRNA synthetase alpha subunit type 1 subfamily.</text>
</comment>
<dbReference type="EC" id="6.1.1.20" evidence="1"/>
<dbReference type="EMBL" id="CP000926">
    <property type="protein sequence ID" value="ABY99368.1"/>
    <property type="molecule type" value="Genomic_DNA"/>
</dbReference>
<dbReference type="RefSeq" id="WP_003250674.1">
    <property type="nucleotide sequence ID" value="NC_010322.1"/>
</dbReference>
<dbReference type="SMR" id="B0KKR4"/>
<dbReference type="GeneID" id="83681010"/>
<dbReference type="KEGG" id="ppg:PputGB1_3477"/>
<dbReference type="eggNOG" id="COG0016">
    <property type="taxonomic scope" value="Bacteria"/>
</dbReference>
<dbReference type="HOGENOM" id="CLU_025086_0_1_6"/>
<dbReference type="Proteomes" id="UP000002157">
    <property type="component" value="Chromosome"/>
</dbReference>
<dbReference type="GO" id="GO:0005737">
    <property type="term" value="C:cytoplasm"/>
    <property type="evidence" value="ECO:0007669"/>
    <property type="project" value="UniProtKB-SubCell"/>
</dbReference>
<dbReference type="GO" id="GO:0005524">
    <property type="term" value="F:ATP binding"/>
    <property type="evidence" value="ECO:0007669"/>
    <property type="project" value="UniProtKB-UniRule"/>
</dbReference>
<dbReference type="GO" id="GO:0000287">
    <property type="term" value="F:magnesium ion binding"/>
    <property type="evidence" value="ECO:0007669"/>
    <property type="project" value="UniProtKB-UniRule"/>
</dbReference>
<dbReference type="GO" id="GO:0004826">
    <property type="term" value="F:phenylalanine-tRNA ligase activity"/>
    <property type="evidence" value="ECO:0007669"/>
    <property type="project" value="UniProtKB-UniRule"/>
</dbReference>
<dbReference type="GO" id="GO:0000049">
    <property type="term" value="F:tRNA binding"/>
    <property type="evidence" value="ECO:0007669"/>
    <property type="project" value="InterPro"/>
</dbReference>
<dbReference type="GO" id="GO:0006432">
    <property type="term" value="P:phenylalanyl-tRNA aminoacylation"/>
    <property type="evidence" value="ECO:0007669"/>
    <property type="project" value="UniProtKB-UniRule"/>
</dbReference>
<dbReference type="CDD" id="cd00496">
    <property type="entry name" value="PheRS_alpha_core"/>
    <property type="match status" value="1"/>
</dbReference>
<dbReference type="FunFam" id="3.30.930.10:FF:000003">
    <property type="entry name" value="Phenylalanine--tRNA ligase alpha subunit"/>
    <property type="match status" value="1"/>
</dbReference>
<dbReference type="Gene3D" id="3.30.930.10">
    <property type="entry name" value="Bira Bifunctional Protein, Domain 2"/>
    <property type="match status" value="1"/>
</dbReference>
<dbReference type="HAMAP" id="MF_00281">
    <property type="entry name" value="Phe_tRNA_synth_alpha1"/>
    <property type="match status" value="1"/>
</dbReference>
<dbReference type="InterPro" id="IPR006195">
    <property type="entry name" value="aa-tRNA-synth_II"/>
</dbReference>
<dbReference type="InterPro" id="IPR045864">
    <property type="entry name" value="aa-tRNA-synth_II/BPL/LPL"/>
</dbReference>
<dbReference type="InterPro" id="IPR004529">
    <property type="entry name" value="Phe-tRNA-synth_IIc_asu"/>
</dbReference>
<dbReference type="InterPro" id="IPR004188">
    <property type="entry name" value="Phe-tRNA_ligase_II_N"/>
</dbReference>
<dbReference type="InterPro" id="IPR022911">
    <property type="entry name" value="Phe_tRNA_ligase_alpha1_bac"/>
</dbReference>
<dbReference type="InterPro" id="IPR002319">
    <property type="entry name" value="Phenylalanyl-tRNA_Synthase"/>
</dbReference>
<dbReference type="InterPro" id="IPR010978">
    <property type="entry name" value="tRNA-bd_arm"/>
</dbReference>
<dbReference type="NCBIfam" id="TIGR00468">
    <property type="entry name" value="pheS"/>
    <property type="match status" value="1"/>
</dbReference>
<dbReference type="PANTHER" id="PTHR11538:SF41">
    <property type="entry name" value="PHENYLALANINE--TRNA LIGASE, MITOCHONDRIAL"/>
    <property type="match status" value="1"/>
</dbReference>
<dbReference type="PANTHER" id="PTHR11538">
    <property type="entry name" value="PHENYLALANYL-TRNA SYNTHETASE"/>
    <property type="match status" value="1"/>
</dbReference>
<dbReference type="Pfam" id="PF02912">
    <property type="entry name" value="Phe_tRNA-synt_N"/>
    <property type="match status" value="1"/>
</dbReference>
<dbReference type="Pfam" id="PF01409">
    <property type="entry name" value="tRNA-synt_2d"/>
    <property type="match status" value="1"/>
</dbReference>
<dbReference type="SUPFAM" id="SSF55681">
    <property type="entry name" value="Class II aaRS and biotin synthetases"/>
    <property type="match status" value="1"/>
</dbReference>
<dbReference type="SUPFAM" id="SSF46589">
    <property type="entry name" value="tRNA-binding arm"/>
    <property type="match status" value="1"/>
</dbReference>
<dbReference type="PROSITE" id="PS50862">
    <property type="entry name" value="AA_TRNA_LIGASE_II"/>
    <property type="match status" value="1"/>
</dbReference>
<name>SYFA_PSEPG</name>
<protein>
    <recommendedName>
        <fullName evidence="1">Phenylalanine--tRNA ligase alpha subunit</fullName>
        <ecNumber evidence="1">6.1.1.20</ecNumber>
    </recommendedName>
    <alternativeName>
        <fullName evidence="1">Phenylalanyl-tRNA synthetase alpha subunit</fullName>
        <shortName evidence="1">PheRS</shortName>
    </alternativeName>
</protein>
<keyword id="KW-0030">Aminoacyl-tRNA synthetase</keyword>
<keyword id="KW-0067">ATP-binding</keyword>
<keyword id="KW-0963">Cytoplasm</keyword>
<keyword id="KW-0436">Ligase</keyword>
<keyword id="KW-0460">Magnesium</keyword>
<keyword id="KW-0479">Metal-binding</keyword>
<keyword id="KW-0547">Nucleotide-binding</keyword>
<keyword id="KW-0648">Protein biosynthesis</keyword>
<organism>
    <name type="scientific">Pseudomonas putida (strain GB-1)</name>
    <dbReference type="NCBI Taxonomy" id="76869"/>
    <lineage>
        <taxon>Bacteria</taxon>
        <taxon>Pseudomonadati</taxon>
        <taxon>Pseudomonadota</taxon>
        <taxon>Gammaproteobacteria</taxon>
        <taxon>Pseudomonadales</taxon>
        <taxon>Pseudomonadaceae</taxon>
        <taxon>Pseudomonas</taxon>
    </lineage>
</organism>
<evidence type="ECO:0000255" key="1">
    <source>
        <dbReference type="HAMAP-Rule" id="MF_00281"/>
    </source>
</evidence>
<accession>B0KKR4</accession>
<proteinExistence type="inferred from homology"/>
<reference key="1">
    <citation type="submission" date="2008-01" db="EMBL/GenBank/DDBJ databases">
        <title>Complete sequence of Pseudomonas putida GB-1.</title>
        <authorList>
            <consortium name="US DOE Joint Genome Institute"/>
            <person name="Copeland A."/>
            <person name="Lucas S."/>
            <person name="Lapidus A."/>
            <person name="Barry K."/>
            <person name="Glavina del Rio T."/>
            <person name="Dalin E."/>
            <person name="Tice H."/>
            <person name="Pitluck S."/>
            <person name="Bruce D."/>
            <person name="Goodwin L."/>
            <person name="Chertkov O."/>
            <person name="Brettin T."/>
            <person name="Detter J.C."/>
            <person name="Han C."/>
            <person name="Kuske C.R."/>
            <person name="Schmutz J."/>
            <person name="Larimer F."/>
            <person name="Land M."/>
            <person name="Hauser L."/>
            <person name="Kyrpides N."/>
            <person name="Kim E."/>
            <person name="McCarthy J.K."/>
            <person name="Richardson P."/>
        </authorList>
    </citation>
    <scope>NUCLEOTIDE SEQUENCE [LARGE SCALE GENOMIC DNA]</scope>
    <source>
        <strain>GB-1</strain>
    </source>
</reference>
<feature type="chain" id="PRO_1000078847" description="Phenylalanine--tRNA ligase alpha subunit">
    <location>
        <begin position="1"/>
        <end position="338"/>
    </location>
</feature>
<feature type="binding site" evidence="1">
    <location>
        <position position="252"/>
    </location>
    <ligand>
        <name>Mg(2+)</name>
        <dbReference type="ChEBI" id="CHEBI:18420"/>
        <note>shared with beta subunit</note>
    </ligand>
</feature>